<gene>
    <name type="ordered locus">At4g33640</name>
    <name type="ORF">T16L1.130</name>
</gene>
<reference key="1">
    <citation type="journal article" date="1999" name="Nature">
        <title>Sequence and analysis of chromosome 4 of the plant Arabidopsis thaliana.</title>
        <authorList>
            <person name="Mayer K.F.X."/>
            <person name="Schueller C."/>
            <person name="Wambutt R."/>
            <person name="Murphy G."/>
            <person name="Volckaert G."/>
            <person name="Pohl T."/>
            <person name="Duesterhoeft A."/>
            <person name="Stiekema W."/>
            <person name="Entian K.-D."/>
            <person name="Terryn N."/>
            <person name="Harris B."/>
            <person name="Ansorge W."/>
            <person name="Brandt P."/>
            <person name="Grivell L.A."/>
            <person name="Rieger M."/>
            <person name="Weichselgartner M."/>
            <person name="de Simone V."/>
            <person name="Obermaier B."/>
            <person name="Mache R."/>
            <person name="Mueller M."/>
            <person name="Kreis M."/>
            <person name="Delseny M."/>
            <person name="Puigdomenech P."/>
            <person name="Watson M."/>
            <person name="Schmidtheini T."/>
            <person name="Reichert B."/>
            <person name="Portetelle D."/>
            <person name="Perez-Alonso M."/>
            <person name="Boutry M."/>
            <person name="Bancroft I."/>
            <person name="Vos P."/>
            <person name="Hoheisel J."/>
            <person name="Zimmermann W."/>
            <person name="Wedler H."/>
            <person name="Ridley P."/>
            <person name="Langham S.-A."/>
            <person name="McCullagh B."/>
            <person name="Bilham L."/>
            <person name="Robben J."/>
            <person name="van der Schueren J."/>
            <person name="Grymonprez B."/>
            <person name="Chuang Y.-J."/>
            <person name="Vandenbussche F."/>
            <person name="Braeken M."/>
            <person name="Weltjens I."/>
            <person name="Voet M."/>
            <person name="Bastiaens I."/>
            <person name="Aert R."/>
            <person name="Defoor E."/>
            <person name="Weitzenegger T."/>
            <person name="Bothe G."/>
            <person name="Ramsperger U."/>
            <person name="Hilbert H."/>
            <person name="Braun M."/>
            <person name="Holzer E."/>
            <person name="Brandt A."/>
            <person name="Peters S."/>
            <person name="van Staveren M."/>
            <person name="Dirkse W."/>
            <person name="Mooijman P."/>
            <person name="Klein Lankhorst R."/>
            <person name="Rose M."/>
            <person name="Hauf J."/>
            <person name="Koetter P."/>
            <person name="Berneiser S."/>
            <person name="Hempel S."/>
            <person name="Feldpausch M."/>
            <person name="Lamberth S."/>
            <person name="Van den Daele H."/>
            <person name="De Keyser A."/>
            <person name="Buysshaert C."/>
            <person name="Gielen J."/>
            <person name="Villarroel R."/>
            <person name="De Clercq R."/>
            <person name="van Montagu M."/>
            <person name="Rogers J."/>
            <person name="Cronin A."/>
            <person name="Quail M.A."/>
            <person name="Bray-Allen S."/>
            <person name="Clark L."/>
            <person name="Doggett J."/>
            <person name="Hall S."/>
            <person name="Kay M."/>
            <person name="Lennard N."/>
            <person name="McLay K."/>
            <person name="Mayes R."/>
            <person name="Pettett A."/>
            <person name="Rajandream M.A."/>
            <person name="Lyne M."/>
            <person name="Benes V."/>
            <person name="Rechmann S."/>
            <person name="Borkova D."/>
            <person name="Bloecker H."/>
            <person name="Scharfe M."/>
            <person name="Grimm M."/>
            <person name="Loehnert T.-H."/>
            <person name="Dose S."/>
            <person name="de Haan M."/>
            <person name="Maarse A.C."/>
            <person name="Schaefer M."/>
            <person name="Mueller-Auer S."/>
            <person name="Gabel C."/>
            <person name="Fuchs M."/>
            <person name="Fartmann B."/>
            <person name="Granderath K."/>
            <person name="Dauner D."/>
            <person name="Herzl A."/>
            <person name="Neumann S."/>
            <person name="Argiriou A."/>
            <person name="Vitale D."/>
            <person name="Liguori R."/>
            <person name="Piravandi E."/>
            <person name="Massenet O."/>
            <person name="Quigley F."/>
            <person name="Clabauld G."/>
            <person name="Muendlein A."/>
            <person name="Felber R."/>
            <person name="Schnabl S."/>
            <person name="Hiller R."/>
            <person name="Schmidt W."/>
            <person name="Lecharny A."/>
            <person name="Aubourg S."/>
            <person name="Chefdor F."/>
            <person name="Cooke R."/>
            <person name="Berger C."/>
            <person name="Monfort A."/>
            <person name="Casacuberta E."/>
            <person name="Gibbons T."/>
            <person name="Weber N."/>
            <person name="Vandenbol M."/>
            <person name="Bargues M."/>
            <person name="Terol J."/>
            <person name="Torres A."/>
            <person name="Perez-Perez A."/>
            <person name="Purnelle B."/>
            <person name="Bent E."/>
            <person name="Johnson S."/>
            <person name="Tacon D."/>
            <person name="Jesse T."/>
            <person name="Heijnen L."/>
            <person name="Schwarz S."/>
            <person name="Scholler P."/>
            <person name="Heber S."/>
            <person name="Francs P."/>
            <person name="Bielke C."/>
            <person name="Frishman D."/>
            <person name="Haase D."/>
            <person name="Lemcke K."/>
            <person name="Mewes H.-W."/>
            <person name="Stocker S."/>
            <person name="Zaccaria P."/>
            <person name="Bevan M."/>
            <person name="Wilson R.K."/>
            <person name="de la Bastide M."/>
            <person name="Habermann K."/>
            <person name="Parnell L."/>
            <person name="Dedhia N."/>
            <person name="Gnoj L."/>
            <person name="Schutz K."/>
            <person name="Huang E."/>
            <person name="Spiegel L."/>
            <person name="Sekhon M."/>
            <person name="Murray J."/>
            <person name="Sheet P."/>
            <person name="Cordes M."/>
            <person name="Abu-Threideh J."/>
            <person name="Stoneking T."/>
            <person name="Kalicki J."/>
            <person name="Graves T."/>
            <person name="Harmon G."/>
            <person name="Edwards J."/>
            <person name="Latreille P."/>
            <person name="Courtney L."/>
            <person name="Cloud J."/>
            <person name="Abbott A."/>
            <person name="Scott K."/>
            <person name="Johnson D."/>
            <person name="Minx P."/>
            <person name="Bentley D."/>
            <person name="Fulton B."/>
            <person name="Miller N."/>
            <person name="Greco T."/>
            <person name="Kemp K."/>
            <person name="Kramer J."/>
            <person name="Fulton L."/>
            <person name="Mardis E."/>
            <person name="Dante M."/>
            <person name="Pepin K."/>
            <person name="Hillier L.W."/>
            <person name="Nelson J."/>
            <person name="Spieth J."/>
            <person name="Ryan E."/>
            <person name="Andrews S."/>
            <person name="Geisel C."/>
            <person name="Layman D."/>
            <person name="Du H."/>
            <person name="Ali J."/>
            <person name="Berghoff A."/>
            <person name="Jones K."/>
            <person name="Drone K."/>
            <person name="Cotton M."/>
            <person name="Joshu C."/>
            <person name="Antonoiu B."/>
            <person name="Zidanic M."/>
            <person name="Strong C."/>
            <person name="Sun H."/>
            <person name="Lamar B."/>
            <person name="Yordan C."/>
            <person name="Ma P."/>
            <person name="Zhong J."/>
            <person name="Preston R."/>
            <person name="Vil D."/>
            <person name="Shekher M."/>
            <person name="Matero A."/>
            <person name="Shah R."/>
            <person name="Swaby I.K."/>
            <person name="O'Shaughnessy A."/>
            <person name="Rodriguez M."/>
            <person name="Hoffman J."/>
            <person name="Till S."/>
            <person name="Granat S."/>
            <person name="Shohdy N."/>
            <person name="Hasegawa A."/>
            <person name="Hameed A."/>
            <person name="Lodhi M."/>
            <person name="Johnson A."/>
            <person name="Chen E."/>
            <person name="Marra M.A."/>
            <person name="Martienssen R."/>
            <person name="McCombie W.R."/>
        </authorList>
    </citation>
    <scope>NUCLEOTIDE SEQUENCE [LARGE SCALE GENOMIC DNA]</scope>
    <source>
        <strain>cv. Columbia</strain>
    </source>
</reference>
<reference key="2">
    <citation type="journal article" date="2017" name="Plant J.">
        <title>Araport11: a complete reannotation of the Arabidopsis thaliana reference genome.</title>
        <authorList>
            <person name="Cheng C.Y."/>
            <person name="Krishnakumar V."/>
            <person name="Chan A.P."/>
            <person name="Thibaud-Nissen F."/>
            <person name="Schobel S."/>
            <person name="Town C.D."/>
        </authorList>
    </citation>
    <scope>GENOME REANNOTATION</scope>
    <source>
        <strain>cv. Columbia</strain>
    </source>
</reference>
<reference key="3">
    <citation type="submission" date="2006-07" db="EMBL/GenBank/DDBJ databases">
        <title>Large-scale analysis of RIKEN Arabidopsis full-length (RAFL) cDNAs.</title>
        <authorList>
            <person name="Totoki Y."/>
            <person name="Seki M."/>
            <person name="Ishida J."/>
            <person name="Nakajima M."/>
            <person name="Enju A."/>
            <person name="Kamiya A."/>
            <person name="Narusaka M."/>
            <person name="Shin-i T."/>
            <person name="Nakagawa M."/>
            <person name="Sakamoto N."/>
            <person name="Oishi K."/>
            <person name="Kohara Y."/>
            <person name="Kobayashi M."/>
            <person name="Toyoda A."/>
            <person name="Sakaki Y."/>
            <person name="Sakurai T."/>
            <person name="Iida K."/>
            <person name="Akiyama K."/>
            <person name="Satou M."/>
            <person name="Toyoda T."/>
            <person name="Konagaya A."/>
            <person name="Carninci P."/>
            <person name="Kawai J."/>
            <person name="Hayashizaki Y."/>
            <person name="Shinozaki K."/>
        </authorList>
    </citation>
    <scope>NUCLEOTIDE SEQUENCE [LARGE SCALE MRNA]</scope>
    <source>
        <strain>cv. Columbia</strain>
    </source>
</reference>
<reference key="4">
    <citation type="submission" date="2006-05" db="EMBL/GenBank/DDBJ databases">
        <title>Arabidopsis ORF clones.</title>
        <authorList>
            <person name="Quinitio C."/>
            <person name="Chen H."/>
            <person name="Kim C.J."/>
            <person name="Shinn P."/>
            <person name="Ecker J.R."/>
        </authorList>
    </citation>
    <scope>NUCLEOTIDE SEQUENCE [LARGE SCALE MRNA]</scope>
    <source>
        <strain>cv. Columbia</strain>
    </source>
</reference>
<reference key="5">
    <citation type="submission" date="2002-03" db="EMBL/GenBank/DDBJ databases">
        <title>Full-length cDNA from Arabidopsis thaliana.</title>
        <authorList>
            <person name="Brover V.V."/>
            <person name="Troukhan M.E."/>
            <person name="Alexandrov N.A."/>
            <person name="Lu Y.-P."/>
            <person name="Flavell R.B."/>
            <person name="Feldmann K.A."/>
        </authorList>
    </citation>
    <scope>NUCLEOTIDE SEQUENCE [LARGE SCALE MRNA]</scope>
</reference>
<reference key="6">
    <citation type="journal article" date="2012" name="Mol. Cell. Proteomics">
        <title>Comparative large-scale characterisation of plant vs. mammal proteins reveals similar and idiosyncratic N-alpha acetylation features.</title>
        <authorList>
            <person name="Bienvenut W.V."/>
            <person name="Sumpton D."/>
            <person name="Martinez A."/>
            <person name="Lilla S."/>
            <person name="Espagne C."/>
            <person name="Meinnel T."/>
            <person name="Giglione C."/>
        </authorList>
    </citation>
    <scope>ACETYLATION [LARGE SCALE ANALYSIS] AT MET-1</scope>
    <scope>IDENTIFICATION BY MASS SPECTROMETRY [LARGE SCALE ANALYSIS]</scope>
</reference>
<evidence type="ECO:0000305" key="1"/>
<evidence type="ECO:0007744" key="2">
    <source>
    </source>
</evidence>
<accession>Q8LBN7</accession>
<accession>O81881</accession>
<proteinExistence type="evidence at protein level"/>
<name>COSA_ARATH</name>
<sequence>MNVDEEIQKLEEEIHRLGSRQTDGSYKVTFGVLFNDDRCANIFEALVGTLRAAKKRKIVAFEGELLLQGVHDKVEITLRPTPPPPQAAAATAASS</sequence>
<organism>
    <name type="scientific">Arabidopsis thaliana</name>
    <name type="common">Mouse-ear cress</name>
    <dbReference type="NCBI Taxonomy" id="3702"/>
    <lineage>
        <taxon>Eukaryota</taxon>
        <taxon>Viridiplantae</taxon>
        <taxon>Streptophyta</taxon>
        <taxon>Embryophyta</taxon>
        <taxon>Tracheophyta</taxon>
        <taxon>Spermatophyta</taxon>
        <taxon>Magnoliopsida</taxon>
        <taxon>eudicotyledons</taxon>
        <taxon>Gunneridae</taxon>
        <taxon>Pentapetalae</taxon>
        <taxon>rosids</taxon>
        <taxon>malvids</taxon>
        <taxon>Brassicales</taxon>
        <taxon>Brassicaceae</taxon>
        <taxon>Camelineae</taxon>
        <taxon>Arabidopsis</taxon>
    </lineage>
</organism>
<feature type="chain" id="PRO_0000365544" description="Costars family protein At4g33640">
    <location>
        <begin position="1"/>
        <end position="95"/>
    </location>
</feature>
<feature type="modified residue" description="N-acetylmethionine" evidence="2">
    <location>
        <position position="1"/>
    </location>
</feature>
<protein>
    <recommendedName>
        <fullName>Costars family protein At4g33640</fullName>
    </recommendedName>
</protein>
<keyword id="KW-0007">Acetylation</keyword>
<keyword id="KW-1185">Reference proteome</keyword>
<dbReference type="EMBL" id="AL031394">
    <property type="protein sequence ID" value="CAA20577.1"/>
    <property type="status" value="ALT_SEQ"/>
    <property type="molecule type" value="Genomic_DNA"/>
</dbReference>
<dbReference type="EMBL" id="AL161583">
    <property type="protein sequence ID" value="CAB80081.1"/>
    <property type="status" value="ALT_SEQ"/>
    <property type="molecule type" value="Genomic_DNA"/>
</dbReference>
<dbReference type="EMBL" id="CP002687">
    <property type="protein sequence ID" value="AEE86259.1"/>
    <property type="molecule type" value="Genomic_DNA"/>
</dbReference>
<dbReference type="EMBL" id="AK229299">
    <property type="protein sequence ID" value="BAF01162.1"/>
    <property type="molecule type" value="mRNA"/>
</dbReference>
<dbReference type="EMBL" id="BT025572">
    <property type="protein sequence ID" value="ABF58990.1"/>
    <property type="molecule type" value="mRNA"/>
</dbReference>
<dbReference type="EMBL" id="AY087101">
    <property type="protein sequence ID" value="AAM64660.1"/>
    <property type="molecule type" value="mRNA"/>
</dbReference>
<dbReference type="PIR" id="T04981">
    <property type="entry name" value="T04981"/>
</dbReference>
<dbReference type="RefSeq" id="NP_001329390.1">
    <property type="nucleotide sequence ID" value="NM_001342226.1"/>
</dbReference>
<dbReference type="RefSeq" id="NP_567930.1">
    <property type="nucleotide sequence ID" value="NM_119520.4"/>
</dbReference>
<dbReference type="SMR" id="Q8LBN7"/>
<dbReference type="FunCoup" id="Q8LBN7">
    <property type="interactions" value="713"/>
</dbReference>
<dbReference type="GlyGen" id="Q8LBN7">
    <property type="glycosylation" value="1 site"/>
</dbReference>
<dbReference type="iPTMnet" id="Q8LBN7"/>
<dbReference type="PaxDb" id="3702-AT4G33640.1"/>
<dbReference type="ProteomicsDB" id="240954"/>
<dbReference type="EnsemblPlants" id="AT4G33640.1">
    <property type="protein sequence ID" value="AT4G33640.1"/>
    <property type="gene ID" value="AT4G33640"/>
</dbReference>
<dbReference type="GeneID" id="829505"/>
<dbReference type="Gramene" id="AT4G33640.1">
    <property type="protein sequence ID" value="AT4G33640.1"/>
    <property type="gene ID" value="AT4G33640"/>
</dbReference>
<dbReference type="KEGG" id="ath:AT4G33640"/>
<dbReference type="Araport" id="AT4G33640"/>
<dbReference type="TAIR" id="AT4G33640"/>
<dbReference type="eggNOG" id="KOG3376">
    <property type="taxonomic scope" value="Eukaryota"/>
</dbReference>
<dbReference type="HOGENOM" id="CLU_173478_0_0_1"/>
<dbReference type="InParanoid" id="Q8LBN7"/>
<dbReference type="OMA" id="QRVHDNV"/>
<dbReference type="OrthoDB" id="9871914at2759"/>
<dbReference type="PhylomeDB" id="Q8LBN7"/>
<dbReference type="PRO" id="PR:Q8LBN7"/>
<dbReference type="Proteomes" id="UP000006548">
    <property type="component" value="Chromosome 4"/>
</dbReference>
<dbReference type="ExpressionAtlas" id="Q8LBN7">
    <property type="expression patterns" value="baseline and differential"/>
</dbReference>
<dbReference type="GO" id="GO:0005829">
    <property type="term" value="C:cytosol"/>
    <property type="evidence" value="ECO:0007005"/>
    <property type="project" value="TAIR"/>
</dbReference>
<dbReference type="FunFam" id="1.10.10.1540:FF:000002">
    <property type="entry name" value="costars family protein ABRACL"/>
    <property type="match status" value="1"/>
</dbReference>
<dbReference type="Gene3D" id="1.10.10.1540">
    <property type="entry name" value="Costar domain"/>
    <property type="match status" value="1"/>
</dbReference>
<dbReference type="InterPro" id="IPR044302">
    <property type="entry name" value="Costars"/>
</dbReference>
<dbReference type="InterPro" id="IPR027817">
    <property type="entry name" value="Costars_dom"/>
</dbReference>
<dbReference type="InterPro" id="IPR038095">
    <property type="entry name" value="Costars_sf"/>
</dbReference>
<dbReference type="PANTHER" id="PTHR46334">
    <property type="entry name" value="COSTARS FAMILY PROTEIN ABRACL"/>
    <property type="match status" value="1"/>
</dbReference>
<dbReference type="PANTHER" id="PTHR46334:SF3">
    <property type="entry name" value="COSTARS FAMILY PROTEIN-LIKE"/>
    <property type="match status" value="1"/>
</dbReference>
<dbReference type="Pfam" id="PF14705">
    <property type="entry name" value="Costars"/>
    <property type="match status" value="1"/>
</dbReference>
<dbReference type="SMART" id="SM01283">
    <property type="entry name" value="Costars"/>
    <property type="match status" value="1"/>
</dbReference>
<comment type="similarity">
    <text evidence="1">Belongs to the costars family.</text>
</comment>
<comment type="sequence caution" evidence="1">
    <conflict type="erroneous gene model prediction">
        <sequence resource="EMBL-CDS" id="CAA20577"/>
    </conflict>
</comment>
<comment type="sequence caution" evidence="1">
    <conflict type="erroneous gene model prediction">
        <sequence resource="EMBL-CDS" id="CAB80081"/>
    </conflict>
</comment>